<name>AAMAT_AMAFU</name>
<sequence>MSDINATRLPIWGIGCNPSVGDEVTALLTSGEA</sequence>
<reference key="1">
    <citation type="journal article" date="2014" name="Toxicon">
        <title>The molecular diversity of toxin gene families in lethal Amanita mushrooms.</title>
        <authorList>
            <person name="Li P."/>
            <person name="Deng W."/>
            <person name="Li T."/>
        </authorList>
    </citation>
    <scope>NUCLEOTIDE SEQUENCE [GENOMIC DNA]</scope>
    <scope>FUNCTION</scope>
</reference>
<reference key="2">
    <citation type="journal article" date="2002" name="J. Toxicol. Clin. Toxicol.">
        <title>Treatment of amatoxin poisoning: 20-year retrospective analysis.</title>
        <authorList>
            <person name="Enjalbert F."/>
            <person name="Rapior S."/>
            <person name="Nouguier-Soule J."/>
            <person name="Guillon S."/>
            <person name="Amouroux N."/>
            <person name="Cabot C."/>
        </authorList>
    </citation>
    <scope>REVIEW ON TOXICITY</scope>
</reference>
<dbReference type="EMBL" id="KF552094">
    <property type="protein sequence ID" value="AHB18722.1"/>
    <property type="molecule type" value="Genomic_DNA"/>
</dbReference>
<dbReference type="EMBL" id="KF546281">
    <property type="protein sequence ID" value="AHX98305.1"/>
    <property type="molecule type" value="Genomic_DNA"/>
</dbReference>
<dbReference type="EMBL" id="KF546282">
    <property type="protein sequence ID" value="AHX98306.1"/>
    <property type="molecule type" value="Genomic_DNA"/>
</dbReference>
<dbReference type="SMR" id="A0A023IWG4"/>
<dbReference type="GO" id="GO:0090729">
    <property type="term" value="F:toxin activity"/>
    <property type="evidence" value="ECO:0007669"/>
    <property type="project" value="UniProtKB-KW"/>
</dbReference>
<dbReference type="InterPro" id="IPR027582">
    <property type="entry name" value="Amanitin/phalloidin"/>
</dbReference>
<dbReference type="NCBIfam" id="TIGR04309">
    <property type="entry name" value="amanitin"/>
    <property type="match status" value="1"/>
</dbReference>
<dbReference type="Pfam" id="PF24112">
    <property type="entry name" value="Amanitin"/>
    <property type="match status" value="1"/>
</dbReference>
<keyword id="KW-0379">Hydroxylation</keyword>
<keyword id="KW-0883">Thioether bond</keyword>
<keyword id="KW-0800">Toxin</keyword>
<protein>
    <recommendedName>
        <fullName evidence="5">Alpha-amanitin proprotein</fullName>
    </recommendedName>
    <component>
        <recommendedName>
            <fullName evidence="5">Alpha-amanitin</fullName>
        </recommendedName>
        <alternativeName>
            <fullName evidence="5">Amatoxin</fullName>
        </alternativeName>
        <alternativeName>
            <fullName evidence="3">Gamma-amanitin</fullName>
        </alternativeName>
    </component>
</protein>
<comment type="function">
    <text evidence="7">Major toxin belonging to the bicyclic octapeptides amatoxins that acts by binding non-competitively to RNA polymerase II and greatly slowing the elongation of transcripts from target promoters (PubMed:24613547).</text>
</comment>
<comment type="PTM">
    <text evidence="1 7">Processed by the macrocyclase-peptidase enzyme POPB to yield a toxic cyclic decapeptide (PubMed:24613547). POPB first removes 10 residues from the N-terminus (By similarity). Conformational trapping of the remaining peptide forces the enzyme to release this intermediate rather than proceed to macrocyclization (By similarity). The enzyme rebinds the remaining peptide in a different conformation and catalyzes macrocyclization of the N-terminal 8 residues (By similarity).</text>
</comment>
<comment type="miscellaneous">
    <text evidence="4">The typical symptoms of amatoxin poisoning are gastro-intestinal distress beginning 6-12 hours after ingestion, a remission phase lasting 12-24 hours, and progressive loss of liver function culminating in death within 3-5 days (PubMed:24613547). One of the few effective treatments is liver transplantation (PubMed:12475187).</text>
</comment>
<comment type="similarity">
    <text evidence="6">Belongs to the MSDIN fungal toxin family.</text>
</comment>
<organism>
    <name type="scientific">Amanita fuliginea</name>
    <name type="common">East Asian brown death cap</name>
    <dbReference type="NCBI Taxonomy" id="67708"/>
    <lineage>
        <taxon>Eukaryota</taxon>
        <taxon>Fungi</taxon>
        <taxon>Dikarya</taxon>
        <taxon>Basidiomycota</taxon>
        <taxon>Agaricomycotina</taxon>
        <taxon>Agaricomycetes</taxon>
        <taxon>Agaricomycetidae</taxon>
        <taxon>Agaricales</taxon>
        <taxon>Pluteineae</taxon>
        <taxon>Amanitaceae</taxon>
        <taxon>Amanita</taxon>
    </lineage>
</organism>
<accession>A0A023IWG4</accession>
<accession>A0A023UA14</accession>
<feature type="propeptide" id="PRO_0000443578" evidence="2">
    <location>
        <begin position="1"/>
        <end position="10"/>
    </location>
</feature>
<feature type="peptide" id="PRO_0000443579" description="Alpha-amanitin" evidence="2">
    <location>
        <begin position="11"/>
        <end position="18"/>
    </location>
</feature>
<feature type="propeptide" id="PRO_0000443580" evidence="2">
    <location>
        <begin position="19"/>
        <end position="33"/>
    </location>
</feature>
<feature type="modified residue" description="(3R,4R)-4,5-dihydroxyisoleucine; in form alpha-amanitin" evidence="3">
    <location>
        <position position="11"/>
    </location>
</feature>
<feature type="modified residue" description="(3R,4S)-4-hydroxyisoleucine; in form gamma-amanitin" evidence="3">
    <location>
        <position position="11"/>
    </location>
</feature>
<feature type="modified residue" description="4-hydroxyproline" evidence="3">
    <location>
        <position position="18"/>
    </location>
</feature>
<feature type="cross-link" description="Cyclopeptide (Ile-Pro)" evidence="3">
    <location>
        <begin position="11"/>
        <end position="18"/>
    </location>
</feature>
<feature type="cross-link" description="2'-cysteinyl-6'-hydroxytryptophan sulfoxide (Trp-Cys)" evidence="3">
    <location>
        <begin position="12"/>
        <end position="16"/>
    </location>
</feature>
<gene>
    <name evidence="5" type="primary">AMA</name>
</gene>
<evidence type="ECO:0000250" key="1">
    <source>
        <dbReference type="UniProtKB" id="A0A067SLB9"/>
    </source>
</evidence>
<evidence type="ECO:0000250" key="2">
    <source>
        <dbReference type="UniProtKB" id="A8W7M4"/>
    </source>
</evidence>
<evidence type="ECO:0000250" key="3">
    <source>
        <dbReference type="UniProtKB" id="P85421"/>
    </source>
</evidence>
<evidence type="ECO:0000303" key="4">
    <source>
    </source>
</evidence>
<evidence type="ECO:0000303" key="5">
    <source>
    </source>
</evidence>
<evidence type="ECO:0000305" key="6"/>
<evidence type="ECO:0000305" key="7">
    <source>
    </source>
</evidence>
<proteinExistence type="inferred from homology"/>